<feature type="chain" id="PRO_0000258143" description="Large ribosomal subunit protein uL11">
    <location>
        <begin position="1"/>
        <end position="142"/>
    </location>
</feature>
<reference key="1">
    <citation type="journal article" date="2005" name="Proc. Natl. Acad. Sci. U.S.A.">
        <title>The psychrophilic lifestyle as revealed by the genome sequence of Colwellia psychrerythraea 34H through genomic and proteomic analyses.</title>
        <authorList>
            <person name="Methe B.A."/>
            <person name="Nelson K.E."/>
            <person name="Deming J.W."/>
            <person name="Momen B."/>
            <person name="Melamud E."/>
            <person name="Zhang X."/>
            <person name="Moult J."/>
            <person name="Madupu R."/>
            <person name="Nelson W.C."/>
            <person name="Dodson R.J."/>
            <person name="Brinkac L.M."/>
            <person name="Daugherty S.C."/>
            <person name="Durkin A.S."/>
            <person name="DeBoy R.T."/>
            <person name="Kolonay J.F."/>
            <person name="Sullivan S.A."/>
            <person name="Zhou L."/>
            <person name="Davidsen T.M."/>
            <person name="Wu M."/>
            <person name="Huston A.L."/>
            <person name="Lewis M."/>
            <person name="Weaver B."/>
            <person name="Weidman J.F."/>
            <person name="Khouri H."/>
            <person name="Utterback T.R."/>
            <person name="Feldblyum T.V."/>
            <person name="Fraser C.M."/>
        </authorList>
    </citation>
    <scope>NUCLEOTIDE SEQUENCE [LARGE SCALE GENOMIC DNA]</scope>
    <source>
        <strain>34H / ATCC BAA-681</strain>
    </source>
</reference>
<name>RL11_COLP3</name>
<accession>Q47UV5</accession>
<gene>
    <name evidence="1" type="primary">rplK</name>
    <name type="ordered locus">CPS_4773</name>
</gene>
<keyword id="KW-0488">Methylation</keyword>
<keyword id="KW-0687">Ribonucleoprotein</keyword>
<keyword id="KW-0689">Ribosomal protein</keyword>
<keyword id="KW-0694">RNA-binding</keyword>
<keyword id="KW-0699">rRNA-binding</keyword>
<organism>
    <name type="scientific">Colwellia psychrerythraea (strain 34H / ATCC BAA-681)</name>
    <name type="common">Vibrio psychroerythus</name>
    <dbReference type="NCBI Taxonomy" id="167879"/>
    <lineage>
        <taxon>Bacteria</taxon>
        <taxon>Pseudomonadati</taxon>
        <taxon>Pseudomonadota</taxon>
        <taxon>Gammaproteobacteria</taxon>
        <taxon>Alteromonadales</taxon>
        <taxon>Colwelliaceae</taxon>
        <taxon>Colwellia</taxon>
    </lineage>
</organism>
<sequence>MAKKVQALIKLQVAAGAANPSPPVGPALGQHGVNIMEFCKAFNAKTDSLEKGAPVPVVITVYSDRSFTFETKTPPASFLLKKAAGIKSGSGRPNTDKVGTVTTAQLEEIVKTKEPDLTAGSLEAAVRTIAGSARSMGLVVED</sequence>
<protein>
    <recommendedName>
        <fullName evidence="1">Large ribosomal subunit protein uL11</fullName>
    </recommendedName>
    <alternativeName>
        <fullName evidence="2">50S ribosomal protein L11</fullName>
    </alternativeName>
</protein>
<proteinExistence type="inferred from homology"/>
<evidence type="ECO:0000255" key="1">
    <source>
        <dbReference type="HAMAP-Rule" id="MF_00736"/>
    </source>
</evidence>
<evidence type="ECO:0000305" key="2"/>
<comment type="function">
    <text evidence="1">Forms part of the ribosomal stalk which helps the ribosome interact with GTP-bound translation factors.</text>
</comment>
<comment type="subunit">
    <text evidence="1">Part of the ribosomal stalk of the 50S ribosomal subunit. Interacts with L10 and the large rRNA to form the base of the stalk. L10 forms an elongated spine to which L12 dimers bind in a sequential fashion forming a multimeric L10(L12)X complex.</text>
</comment>
<comment type="PTM">
    <text evidence="1">One or more lysine residues are methylated.</text>
</comment>
<comment type="similarity">
    <text evidence="1">Belongs to the universal ribosomal protein uL11 family.</text>
</comment>
<dbReference type="EMBL" id="CP000083">
    <property type="protein sequence ID" value="AAZ27010.1"/>
    <property type="molecule type" value="Genomic_DNA"/>
</dbReference>
<dbReference type="RefSeq" id="WP_011045498.1">
    <property type="nucleotide sequence ID" value="NC_003910.7"/>
</dbReference>
<dbReference type="SMR" id="Q47UV5"/>
<dbReference type="STRING" id="167879.CPS_4773"/>
<dbReference type="KEGG" id="cps:CPS_4773"/>
<dbReference type="eggNOG" id="COG0080">
    <property type="taxonomic scope" value="Bacteria"/>
</dbReference>
<dbReference type="HOGENOM" id="CLU_074237_2_0_6"/>
<dbReference type="Proteomes" id="UP000000547">
    <property type="component" value="Chromosome"/>
</dbReference>
<dbReference type="GO" id="GO:0022625">
    <property type="term" value="C:cytosolic large ribosomal subunit"/>
    <property type="evidence" value="ECO:0007669"/>
    <property type="project" value="TreeGrafter"/>
</dbReference>
<dbReference type="GO" id="GO:0070180">
    <property type="term" value="F:large ribosomal subunit rRNA binding"/>
    <property type="evidence" value="ECO:0007669"/>
    <property type="project" value="UniProtKB-UniRule"/>
</dbReference>
<dbReference type="GO" id="GO:0003735">
    <property type="term" value="F:structural constituent of ribosome"/>
    <property type="evidence" value="ECO:0007669"/>
    <property type="project" value="InterPro"/>
</dbReference>
<dbReference type="GO" id="GO:0006412">
    <property type="term" value="P:translation"/>
    <property type="evidence" value="ECO:0007669"/>
    <property type="project" value="UniProtKB-UniRule"/>
</dbReference>
<dbReference type="CDD" id="cd00349">
    <property type="entry name" value="Ribosomal_L11"/>
    <property type="match status" value="1"/>
</dbReference>
<dbReference type="FunFam" id="1.10.10.250:FF:000001">
    <property type="entry name" value="50S ribosomal protein L11"/>
    <property type="match status" value="1"/>
</dbReference>
<dbReference type="FunFam" id="3.30.1550.10:FF:000001">
    <property type="entry name" value="50S ribosomal protein L11"/>
    <property type="match status" value="1"/>
</dbReference>
<dbReference type="Gene3D" id="1.10.10.250">
    <property type="entry name" value="Ribosomal protein L11, C-terminal domain"/>
    <property type="match status" value="1"/>
</dbReference>
<dbReference type="Gene3D" id="3.30.1550.10">
    <property type="entry name" value="Ribosomal protein L11/L12, N-terminal domain"/>
    <property type="match status" value="1"/>
</dbReference>
<dbReference type="HAMAP" id="MF_00736">
    <property type="entry name" value="Ribosomal_uL11"/>
    <property type="match status" value="1"/>
</dbReference>
<dbReference type="InterPro" id="IPR000911">
    <property type="entry name" value="Ribosomal_uL11"/>
</dbReference>
<dbReference type="InterPro" id="IPR006519">
    <property type="entry name" value="Ribosomal_uL11_bac-typ"/>
</dbReference>
<dbReference type="InterPro" id="IPR020783">
    <property type="entry name" value="Ribosomal_uL11_C"/>
</dbReference>
<dbReference type="InterPro" id="IPR036769">
    <property type="entry name" value="Ribosomal_uL11_C_sf"/>
</dbReference>
<dbReference type="InterPro" id="IPR020785">
    <property type="entry name" value="Ribosomal_uL11_CS"/>
</dbReference>
<dbReference type="InterPro" id="IPR020784">
    <property type="entry name" value="Ribosomal_uL11_N"/>
</dbReference>
<dbReference type="InterPro" id="IPR036796">
    <property type="entry name" value="Ribosomal_uL11_N_sf"/>
</dbReference>
<dbReference type="NCBIfam" id="TIGR01632">
    <property type="entry name" value="L11_bact"/>
    <property type="match status" value="1"/>
</dbReference>
<dbReference type="PANTHER" id="PTHR11661">
    <property type="entry name" value="60S RIBOSOMAL PROTEIN L12"/>
    <property type="match status" value="1"/>
</dbReference>
<dbReference type="PANTHER" id="PTHR11661:SF1">
    <property type="entry name" value="LARGE RIBOSOMAL SUBUNIT PROTEIN UL11M"/>
    <property type="match status" value="1"/>
</dbReference>
<dbReference type="Pfam" id="PF00298">
    <property type="entry name" value="Ribosomal_L11"/>
    <property type="match status" value="1"/>
</dbReference>
<dbReference type="Pfam" id="PF03946">
    <property type="entry name" value="Ribosomal_L11_N"/>
    <property type="match status" value="1"/>
</dbReference>
<dbReference type="SMART" id="SM00649">
    <property type="entry name" value="RL11"/>
    <property type="match status" value="1"/>
</dbReference>
<dbReference type="SUPFAM" id="SSF54747">
    <property type="entry name" value="Ribosomal L11/L12e N-terminal domain"/>
    <property type="match status" value="1"/>
</dbReference>
<dbReference type="SUPFAM" id="SSF46906">
    <property type="entry name" value="Ribosomal protein L11, C-terminal domain"/>
    <property type="match status" value="1"/>
</dbReference>
<dbReference type="PROSITE" id="PS00359">
    <property type="entry name" value="RIBOSOMAL_L11"/>
    <property type="match status" value="1"/>
</dbReference>